<organism>
    <name type="scientific">Homo sapiens</name>
    <name type="common">Human</name>
    <dbReference type="NCBI Taxonomy" id="9606"/>
    <lineage>
        <taxon>Eukaryota</taxon>
        <taxon>Metazoa</taxon>
        <taxon>Chordata</taxon>
        <taxon>Craniata</taxon>
        <taxon>Vertebrata</taxon>
        <taxon>Euteleostomi</taxon>
        <taxon>Mammalia</taxon>
        <taxon>Eutheria</taxon>
        <taxon>Euarchontoglires</taxon>
        <taxon>Primates</taxon>
        <taxon>Haplorrhini</taxon>
        <taxon>Catarrhini</taxon>
        <taxon>Hominidae</taxon>
        <taxon>Homo</taxon>
    </lineage>
</organism>
<name>VN1R4_HUMAN</name>
<evidence type="ECO:0000255" key="1"/>
<evidence type="ECO:0000255" key="2">
    <source>
        <dbReference type="PROSITE-ProRule" id="PRU00521"/>
    </source>
</evidence>
<evidence type="ECO:0000269" key="3">
    <source>
    </source>
</evidence>
<evidence type="ECO:0000269" key="4">
    <source>
    </source>
</evidence>
<evidence type="ECO:0000269" key="5">
    <source>
    </source>
</evidence>
<evidence type="ECO:0000269" key="6">
    <source>
    </source>
</evidence>
<proteinExistence type="evidence at transcript level"/>
<gene>
    <name type="primary">VN1R4</name>
    <name type="synonym">V1RL4</name>
</gene>
<keyword id="KW-1003">Cell membrane</keyword>
<keyword id="KW-0297">G-protein coupled receptor</keyword>
<keyword id="KW-0325">Glycoprotein</keyword>
<keyword id="KW-0472">Membrane</keyword>
<keyword id="KW-0589">Pheromone response</keyword>
<keyword id="KW-0675">Receptor</keyword>
<keyword id="KW-1185">Reference proteome</keyword>
<keyword id="KW-0807">Transducer</keyword>
<keyword id="KW-0812">Transmembrane</keyword>
<keyword id="KW-1133">Transmembrane helix</keyword>
<comment type="function">
    <text>Putative pheromone receptor.</text>
</comment>
<comment type="subcellular location">
    <subcellularLocation>
        <location>Cell membrane</location>
        <topology>Multi-pass membrane protein</topology>
    </subcellularLocation>
</comment>
<comment type="polymorphism">
    <text evidence="5">Various VN1R4 alleles are known. The sequence shown is that of allele VN1R4*2.</text>
</comment>
<comment type="miscellaneous">
    <text>The chimpanzee and gorilla orthologous proteins do not exist, their genes are pseudogenes.</text>
</comment>
<comment type="similarity">
    <text evidence="2">Belongs to the G-protein coupled receptor 1 family.</text>
</comment>
<comment type="online information" name="Protein Spotlight">
    <link uri="https://www.proteinspotlight.org/back_issues/061"/>
    <text>No one nose - Issue 61 of August 2005</text>
</comment>
<reference key="1">
    <citation type="journal article" date="2002" name="Curr. Biol.">
        <title>Novel human vomeronasal receptor-like genes reveal species-specific families.</title>
        <authorList>
            <person name="Rodriguez I."/>
            <person name="Mombaerts P."/>
        </authorList>
    </citation>
    <scope>NUCLEOTIDE SEQUENCE [GENOMIC DNA]</scope>
    <scope>VARIANT ASP-220</scope>
</reference>
<reference key="2">
    <citation type="journal article" date="2003" name="Proc. Natl. Acad. Sci. U.S.A.">
        <title>Evolutionary deterioration of the vomeronasal pheromone transduction pathway in catarrhine primates.</title>
        <authorList>
            <person name="Zhang J."/>
            <person name="Webb D.M."/>
        </authorList>
    </citation>
    <scope>NUCLEOTIDE SEQUENCE [GENOMIC DNA]</scope>
    <scope>VARIANTS VAL-52; LEU-58 AND ASP-220</scope>
</reference>
<reference key="3">
    <citation type="journal article" date="2002" name="FEBS Lett.">
        <title>Identification of G protein-coupled receptor genes from the human genome sequence.</title>
        <authorList>
            <person name="Takeda S."/>
            <person name="Kadowaki S."/>
            <person name="Haga T."/>
            <person name="Takaesu H."/>
            <person name="Mitaku S."/>
        </authorList>
    </citation>
    <scope>NUCLEOTIDE SEQUENCE [LARGE SCALE GENOMIC DNA]</scope>
    <scope>VARIANT ASP-220</scope>
</reference>
<reference key="4">
    <citation type="journal article" date="2004" name="Genome Res.">
        <title>The status, quality, and expansion of the NIH full-length cDNA project: the Mammalian Gene Collection (MGC).</title>
        <authorList>
            <consortium name="The MGC Project Team"/>
        </authorList>
    </citation>
    <scope>NUCLEOTIDE SEQUENCE [LARGE SCALE MRNA]</scope>
    <scope>VARIANT ASP-220</scope>
</reference>
<sequence length="301" mass="33556">MASRYVAVGMILSQTVVGVLGSFSVLLHYLSFYCTGCRLRSTDLIVKHLIVANFLALRCKGVPQTMAAFGVRYFLNALGCKLVFYLHRVGRGVSIGTTCLLSVFQVITVSSRKSRWAKLKEKAPKHVGFSVLLCWIVCMLVNIIFPMYVTGKWNYTNITVNEDLGYCSGGGNNKIAQTLRAMLLSFPDVLCLGLMLWVSSSMVCILHRHKQRVQHIDRSNLSPRASPENRATQSILILVSTFVSSYTLSCLFQVCMALLDNPNSLLVNTSALMSVCFPTLSPFVLMSCDPSVYRFCFAWKR</sequence>
<dbReference type="EMBL" id="AY114733">
    <property type="protein sequence ID" value="AAM66754.1"/>
    <property type="molecule type" value="Genomic_DNA"/>
</dbReference>
<dbReference type="EMBL" id="AY312485">
    <property type="protein sequence ID" value="AAP85618.1"/>
    <property type="molecule type" value="Genomic_DNA"/>
</dbReference>
<dbReference type="EMBL" id="AY312486">
    <property type="protein sequence ID" value="AAP85619.1"/>
    <property type="molecule type" value="Genomic_DNA"/>
</dbReference>
<dbReference type="EMBL" id="AY312487">
    <property type="protein sequence ID" value="AAP85620.1"/>
    <property type="molecule type" value="Genomic_DNA"/>
</dbReference>
<dbReference type="EMBL" id="AY312488">
    <property type="protein sequence ID" value="AAP85621.1"/>
    <property type="molecule type" value="Genomic_DNA"/>
</dbReference>
<dbReference type="EMBL" id="AB083609">
    <property type="protein sequence ID" value="BAB89322.1"/>
    <property type="molecule type" value="Genomic_DNA"/>
</dbReference>
<dbReference type="EMBL" id="BC104935">
    <property type="protein sequence ID" value="AAI04936.1"/>
    <property type="molecule type" value="mRNA"/>
</dbReference>
<dbReference type="EMBL" id="BC104939">
    <property type="protein sequence ID" value="AAI04940.1"/>
    <property type="molecule type" value="mRNA"/>
</dbReference>
<dbReference type="CCDS" id="CCDS33099.1"/>
<dbReference type="RefSeq" id="NP_776256.2">
    <property type="nucleotide sequence ID" value="NM_173857.3"/>
</dbReference>
<dbReference type="RefSeq" id="XP_011525187.1">
    <property type="nucleotide sequence ID" value="XM_011526885.1"/>
</dbReference>
<dbReference type="SMR" id="Q7Z5H5"/>
<dbReference type="BioGRID" id="130445">
    <property type="interactions" value="3"/>
</dbReference>
<dbReference type="STRING" id="9606.ENSP00000310856"/>
<dbReference type="GlyCosmos" id="Q7Z5H5">
    <property type="glycosylation" value="2 sites, No reported glycans"/>
</dbReference>
<dbReference type="GlyGen" id="Q7Z5H5">
    <property type="glycosylation" value="2 sites"/>
</dbReference>
<dbReference type="PhosphoSitePlus" id="Q7Z5H5"/>
<dbReference type="BioMuta" id="VN1R4"/>
<dbReference type="DMDM" id="68566197"/>
<dbReference type="PaxDb" id="9606-ENSP00000310856"/>
<dbReference type="Antibodypedia" id="49778">
    <property type="antibodies" value="124 antibodies from 24 providers"/>
</dbReference>
<dbReference type="DNASU" id="317703"/>
<dbReference type="Ensembl" id="ENST00000311170.5">
    <property type="protein sequence ID" value="ENSP00000310856.4"/>
    <property type="gene ID" value="ENSG00000228567.3"/>
</dbReference>
<dbReference type="GeneID" id="317703"/>
<dbReference type="KEGG" id="hsa:317703"/>
<dbReference type="MANE-Select" id="ENST00000311170.5">
    <property type="protein sequence ID" value="ENSP00000310856.4"/>
    <property type="RefSeq nucleotide sequence ID" value="NM_173857.3"/>
    <property type="RefSeq protein sequence ID" value="NP_776256.2"/>
</dbReference>
<dbReference type="UCSC" id="uc010ydu.3">
    <property type="organism name" value="human"/>
</dbReference>
<dbReference type="AGR" id="HGNC:19871"/>
<dbReference type="CTD" id="317703"/>
<dbReference type="GeneCards" id="VN1R4"/>
<dbReference type="HGNC" id="HGNC:19871">
    <property type="gene designation" value="VN1R4"/>
</dbReference>
<dbReference type="HPA" id="ENSG00000228567">
    <property type="expression patterns" value="Not detected"/>
</dbReference>
<dbReference type="neXtProt" id="NX_Q7Z5H5"/>
<dbReference type="OpenTargets" id="ENSG00000228567"/>
<dbReference type="PharmGKB" id="PA134985458"/>
<dbReference type="VEuPathDB" id="HostDB:ENSG00000228567"/>
<dbReference type="eggNOG" id="ENOG502RD1P">
    <property type="taxonomic scope" value="Eukaryota"/>
</dbReference>
<dbReference type="GeneTree" id="ENSGT00960000186612"/>
<dbReference type="HOGENOM" id="CLU_058641_1_0_1"/>
<dbReference type="InParanoid" id="Q7Z5H5"/>
<dbReference type="OMA" id="CMLVNII"/>
<dbReference type="OrthoDB" id="9606139at2759"/>
<dbReference type="PAN-GO" id="Q7Z5H5">
    <property type="GO annotations" value="0 GO annotations based on evolutionary models"/>
</dbReference>
<dbReference type="PhylomeDB" id="Q7Z5H5"/>
<dbReference type="PathwayCommons" id="Q7Z5H5"/>
<dbReference type="BioGRID-ORCS" id="317703">
    <property type="hits" value="8 hits in 1095 CRISPR screens"/>
</dbReference>
<dbReference type="GeneWiki" id="VN1R4"/>
<dbReference type="GenomeRNAi" id="317703"/>
<dbReference type="Pharos" id="Q7Z5H5">
    <property type="development level" value="Tbio"/>
</dbReference>
<dbReference type="PRO" id="PR:Q7Z5H5"/>
<dbReference type="Proteomes" id="UP000005640">
    <property type="component" value="Chromosome 19"/>
</dbReference>
<dbReference type="RNAct" id="Q7Z5H5">
    <property type="molecule type" value="protein"/>
</dbReference>
<dbReference type="Bgee" id="ENSG00000228567">
    <property type="expression patterns" value="Expressed in male germ line stem cell (sensu Vertebrata) in testis"/>
</dbReference>
<dbReference type="GO" id="GO:0005886">
    <property type="term" value="C:plasma membrane"/>
    <property type="evidence" value="ECO:0007669"/>
    <property type="project" value="UniProtKB-SubCell"/>
</dbReference>
<dbReference type="GO" id="GO:0016503">
    <property type="term" value="F:pheromone receptor activity"/>
    <property type="evidence" value="ECO:0007669"/>
    <property type="project" value="InterPro"/>
</dbReference>
<dbReference type="GO" id="GO:0019236">
    <property type="term" value="P:response to pheromone"/>
    <property type="evidence" value="ECO:0007669"/>
    <property type="project" value="UniProtKB-KW"/>
</dbReference>
<dbReference type="GO" id="GO:0007606">
    <property type="term" value="P:sensory perception of chemical stimulus"/>
    <property type="evidence" value="ECO:0007669"/>
    <property type="project" value="UniProtKB-ARBA"/>
</dbReference>
<dbReference type="CDD" id="cd13949">
    <property type="entry name" value="7tm_V1R_pheromone"/>
    <property type="match status" value="1"/>
</dbReference>
<dbReference type="FunFam" id="1.20.1070.10:FF:000033">
    <property type="entry name" value="Vomeronasal type-1 receptor"/>
    <property type="match status" value="1"/>
</dbReference>
<dbReference type="Gene3D" id="1.20.1070.10">
    <property type="entry name" value="Rhodopsin 7-helix transmembrane proteins"/>
    <property type="match status" value="1"/>
</dbReference>
<dbReference type="InterPro" id="IPR017452">
    <property type="entry name" value="GPCR_Rhodpsn_7TM"/>
</dbReference>
<dbReference type="InterPro" id="IPR004072">
    <property type="entry name" value="Vmron_rcpt_1"/>
</dbReference>
<dbReference type="PANTHER" id="PTHR24062">
    <property type="entry name" value="VOMERONASAL TYPE-1 RECEPTOR"/>
    <property type="match status" value="1"/>
</dbReference>
<dbReference type="Pfam" id="PF03402">
    <property type="entry name" value="V1R"/>
    <property type="match status" value="1"/>
</dbReference>
<dbReference type="PRINTS" id="PR01534">
    <property type="entry name" value="VOMERONASL1R"/>
</dbReference>
<dbReference type="SUPFAM" id="SSF81321">
    <property type="entry name" value="Family A G protein-coupled receptor-like"/>
    <property type="match status" value="1"/>
</dbReference>
<dbReference type="PROSITE" id="PS50262">
    <property type="entry name" value="G_PROTEIN_RECEP_F1_2"/>
    <property type="match status" value="1"/>
</dbReference>
<feature type="chain" id="PRO_0000070217" description="Vomeronasal type-1 receptor 4">
    <location>
        <begin position="1"/>
        <end position="301"/>
    </location>
</feature>
<feature type="topological domain" description="Extracellular" evidence="1">
    <location>
        <begin position="1"/>
        <end position="5"/>
    </location>
</feature>
<feature type="transmembrane region" description="Helical; Name=1" evidence="1">
    <location>
        <begin position="6"/>
        <end position="26"/>
    </location>
</feature>
<feature type="topological domain" description="Cytoplasmic" evidence="1">
    <location>
        <begin position="27"/>
        <end position="48"/>
    </location>
</feature>
<feature type="transmembrane region" description="Helical; Name=2" evidence="1">
    <location>
        <begin position="49"/>
        <end position="69"/>
    </location>
</feature>
<feature type="topological domain" description="Extracellular" evidence="1">
    <location>
        <begin position="70"/>
        <end position="88"/>
    </location>
</feature>
<feature type="transmembrane region" description="Helical; Name=3" evidence="1">
    <location>
        <begin position="89"/>
        <end position="109"/>
    </location>
</feature>
<feature type="topological domain" description="Cytoplasmic" evidence="1">
    <location>
        <begin position="110"/>
        <end position="126"/>
    </location>
</feature>
<feature type="transmembrane region" description="Helical; Name=4" evidence="1">
    <location>
        <begin position="127"/>
        <end position="147"/>
    </location>
</feature>
<feature type="topological domain" description="Extracellular" evidence="1">
    <location>
        <begin position="148"/>
        <end position="185"/>
    </location>
</feature>
<feature type="transmembrane region" description="Helical; Name=5" evidence="1">
    <location>
        <begin position="186"/>
        <end position="206"/>
    </location>
</feature>
<feature type="topological domain" description="Cytoplasmic" evidence="1">
    <location>
        <begin position="207"/>
        <end position="234"/>
    </location>
</feature>
<feature type="transmembrane region" description="Helical; Name=6" evidence="1">
    <location>
        <begin position="235"/>
        <end position="255"/>
    </location>
</feature>
<feature type="topological domain" description="Extracellular" evidence="1">
    <location>
        <begin position="256"/>
        <end position="264"/>
    </location>
</feature>
<feature type="transmembrane region" description="Helical; Name=7" evidence="1">
    <location>
        <begin position="265"/>
        <end position="285"/>
    </location>
</feature>
<feature type="topological domain" description="Cytoplasmic" evidence="1">
    <location>
        <begin position="286"/>
        <end position="301"/>
    </location>
</feature>
<feature type="glycosylation site" description="N-linked (GlcNAc...) asparagine" evidence="1">
    <location>
        <position position="154"/>
    </location>
</feature>
<feature type="glycosylation site" description="N-linked (GlcNAc...) asparagine" evidence="1">
    <location>
        <position position="157"/>
    </location>
</feature>
<feature type="sequence variant" id="VAR_022799" description="In allele VN1R4*3; dbSNP:rs74429916." evidence="5">
    <original>A</original>
    <variation>V</variation>
    <location>
        <position position="52"/>
    </location>
</feature>
<feature type="sequence variant" id="VAR_022800" description="In allele VN1R4*4; dbSNP:rs140031028." evidence="5">
    <original>R</original>
    <variation>L</variation>
    <location>
        <position position="58"/>
    </location>
</feature>
<feature type="sequence variant" id="VAR_022801" description="In allele VN1R4*1 and allele VN1R4*4; dbSNP:rs12977715." evidence="3 4 5 6">
    <original>N</original>
    <variation>D</variation>
    <location>
        <position position="220"/>
    </location>
</feature>
<protein>
    <recommendedName>
        <fullName>Vomeronasal type-1 receptor 4</fullName>
    </recommendedName>
    <alternativeName>
        <fullName>G-protein coupled receptor GPCR27</fullName>
        <shortName>hGPCR27</shortName>
    </alternativeName>
    <alternativeName>
        <fullName>V1r-like receptor 4</fullName>
    </alternativeName>
</protein>
<accession>Q7Z5H5</accession>
<accession>Q2M3E2</accession>
<accession>Q7Z5H6</accession>
<accession>Q7Z5H7</accession>
<accession>Q8TDU2</accession>